<organism>
    <name type="scientific">Schizosaccharomyces pombe (strain 972 / ATCC 24843)</name>
    <name type="common">Fission yeast</name>
    <dbReference type="NCBI Taxonomy" id="284812"/>
    <lineage>
        <taxon>Eukaryota</taxon>
        <taxon>Fungi</taxon>
        <taxon>Dikarya</taxon>
        <taxon>Ascomycota</taxon>
        <taxon>Taphrinomycotina</taxon>
        <taxon>Schizosaccharomycetes</taxon>
        <taxon>Schizosaccharomycetales</taxon>
        <taxon>Schizosaccharomycetaceae</taxon>
        <taxon>Schizosaccharomyces</taxon>
    </lineage>
</organism>
<dbReference type="EMBL" id="CU329670">
    <property type="protein sequence ID" value="CAB59686.2"/>
    <property type="molecule type" value="Genomic_DNA"/>
</dbReference>
<dbReference type="PIR" id="T37673">
    <property type="entry name" value="T37673"/>
</dbReference>
<dbReference type="RefSeq" id="NP_594667.2">
    <property type="nucleotide sequence ID" value="NM_001020096.2"/>
</dbReference>
<dbReference type="SMR" id="Q9UTL8"/>
<dbReference type="BioGRID" id="279303">
    <property type="interactions" value="32"/>
</dbReference>
<dbReference type="FunCoup" id="Q9UTL8">
    <property type="interactions" value="382"/>
</dbReference>
<dbReference type="STRING" id="284812.Q9UTL8"/>
<dbReference type="iPTMnet" id="Q9UTL8"/>
<dbReference type="PaxDb" id="4896-SPAC144.06.1"/>
<dbReference type="EnsemblFungi" id="SPAC144.06.1">
    <property type="protein sequence ID" value="SPAC144.06.1:pep"/>
    <property type="gene ID" value="SPAC144.06"/>
</dbReference>
<dbReference type="GeneID" id="2542857"/>
<dbReference type="KEGG" id="spo:2542857"/>
<dbReference type="PomBase" id="SPAC144.06">
    <property type="gene designation" value="apl5"/>
</dbReference>
<dbReference type="VEuPathDB" id="FungiDB:SPAC144.06"/>
<dbReference type="eggNOG" id="KOG1059">
    <property type="taxonomic scope" value="Eukaryota"/>
</dbReference>
<dbReference type="HOGENOM" id="CLU_001908_1_0_1"/>
<dbReference type="InParanoid" id="Q9UTL8"/>
<dbReference type="OMA" id="CIHTIII"/>
<dbReference type="PRO" id="PR:Q9UTL8"/>
<dbReference type="Proteomes" id="UP000002485">
    <property type="component" value="Chromosome I"/>
</dbReference>
<dbReference type="GO" id="GO:0030123">
    <property type="term" value="C:AP-3 adaptor complex"/>
    <property type="evidence" value="ECO:0000318"/>
    <property type="project" value="GO_Central"/>
</dbReference>
<dbReference type="GO" id="GO:0030665">
    <property type="term" value="C:clathrin-coated vesicle membrane"/>
    <property type="evidence" value="ECO:0007669"/>
    <property type="project" value="UniProtKB-SubCell"/>
</dbReference>
<dbReference type="GO" id="GO:0010008">
    <property type="term" value="C:endosome membrane"/>
    <property type="evidence" value="ECO:0000318"/>
    <property type="project" value="GO_Central"/>
</dbReference>
<dbReference type="GO" id="GO:0005794">
    <property type="term" value="C:Golgi apparatus"/>
    <property type="evidence" value="ECO:0007669"/>
    <property type="project" value="UniProtKB-SubCell"/>
</dbReference>
<dbReference type="GO" id="GO:0005634">
    <property type="term" value="C:nucleus"/>
    <property type="evidence" value="ECO:0007005"/>
    <property type="project" value="PomBase"/>
</dbReference>
<dbReference type="GO" id="GO:0006896">
    <property type="term" value="P:Golgi to vacuole transport"/>
    <property type="evidence" value="ECO:0000318"/>
    <property type="project" value="GO_Central"/>
</dbReference>
<dbReference type="GO" id="GO:0006623">
    <property type="term" value="P:protein targeting to vacuole"/>
    <property type="evidence" value="ECO:0000318"/>
    <property type="project" value="GO_Central"/>
</dbReference>
<dbReference type="Gene3D" id="1.25.10.10">
    <property type="entry name" value="Leucine-rich Repeat Variant"/>
    <property type="match status" value="1"/>
</dbReference>
<dbReference type="InterPro" id="IPR017105">
    <property type="entry name" value="AP3_complex_dsu"/>
</dbReference>
<dbReference type="InterPro" id="IPR011989">
    <property type="entry name" value="ARM-like"/>
</dbReference>
<dbReference type="InterPro" id="IPR016024">
    <property type="entry name" value="ARM-type_fold"/>
</dbReference>
<dbReference type="InterPro" id="IPR002553">
    <property type="entry name" value="Clathrin/coatomer_adapt-like_N"/>
</dbReference>
<dbReference type="PANTHER" id="PTHR22781:SF12">
    <property type="entry name" value="AP-3 COMPLEX SUBUNIT DELTA-1"/>
    <property type="match status" value="1"/>
</dbReference>
<dbReference type="PANTHER" id="PTHR22781">
    <property type="entry name" value="DELTA ADAPTIN-RELATED"/>
    <property type="match status" value="1"/>
</dbReference>
<dbReference type="Pfam" id="PF01602">
    <property type="entry name" value="Adaptin_N"/>
    <property type="match status" value="1"/>
</dbReference>
<dbReference type="PIRSF" id="PIRSF037092">
    <property type="entry name" value="AP3_complex_delta"/>
    <property type="match status" value="1"/>
</dbReference>
<dbReference type="SUPFAM" id="SSF48371">
    <property type="entry name" value="ARM repeat"/>
    <property type="match status" value="1"/>
</dbReference>
<evidence type="ECO:0000250" key="1"/>
<evidence type="ECO:0000250" key="2">
    <source>
        <dbReference type="UniProtKB" id="Q08951"/>
    </source>
</evidence>
<evidence type="ECO:0000256" key="3">
    <source>
        <dbReference type="SAM" id="MobiDB-lite"/>
    </source>
</evidence>
<evidence type="ECO:0000305" key="4"/>
<name>AP3D_SCHPO</name>
<sequence>MVFERTLIDLIKGIRSHANDEEAFIATCLLECRKEATSQDADLKSEAILKLAYLEMLGVDISWASFQIVEVMSSSKILQKQKGYLAAVQSFKPDTDVLMLTTNLLKKDLMSSKVPEITLAIDGLSHFSTLGLARDLYRDVLILLNHSVPYVRKRTILLLYRLCLQYPEAISACIPKLRERLDDPDTSVVNAAVSVICELARRAPKNYLEFAPDLFHLLTTSSNNWMLIKLIKLFASLTPYEPRLVKKLIPSLTDIIENTHAMSLLYECINTIVSGNMLVGHSQCDKLASLCASKLRGFFEDTDQNLKYIALLCLRKLANTHPSLVSAQLDIILKCLVDTDTSIRLRALDLVNEIVNKENIRTIVKTLMLQLIVSSDESAVEDIRNSTATRIIEMTSKSTYMNIADFEWLLTVYVDLANIPGIDTGTLLNNQIIDLCVRVKALRPFSVDIFSQAILDPSYVSTTDCSVSEKRTDILPAIIWCLGEYAEFIEEYLDILDALTRPSFKKCSNLAHRLLLQAITKIFCQWCLEEEPTWGVEKFGLVKLWVEKIVSFIEQFLNFQDMEIQRRASEFYILFNQVSDIVNTSDTMEVLELQKKPPYIVQNTMYKLFFGEPLNPVAVKAQRKVMPDENLDLNCPINGVIEVPKELLENIIQSDDSLINFDTEVPSSGIDTFSKKQFNSLESVPVQRDLSSPFYLSSNQHTTTTNSEPENLNVETSMSDEAFNADKVTKVTKNKRRRKIFTSPSLQAMVVAQDEVPEGISLADIENKENPSNSNVYSLISLDPPLSTNQGSMGDIVLETKSPIRVEKKKSKKKKKKKEKTSGKE</sequence>
<proteinExistence type="inferred from homology"/>
<keyword id="KW-0968">Cytoplasmic vesicle</keyword>
<keyword id="KW-0333">Golgi apparatus</keyword>
<keyword id="KW-0472">Membrane</keyword>
<keyword id="KW-0653">Protein transport</keyword>
<keyword id="KW-1185">Reference proteome</keyword>
<keyword id="KW-0677">Repeat</keyword>
<keyword id="KW-0813">Transport</keyword>
<feature type="chain" id="PRO_0000227680" description="AP-3 complex subunit delta">
    <location>
        <begin position="1"/>
        <end position="825"/>
    </location>
</feature>
<feature type="repeat" description="HEAT 1">
    <location>
        <begin position="131"/>
        <end position="168"/>
    </location>
</feature>
<feature type="repeat" description="HEAT 2">
    <location>
        <begin position="169"/>
        <end position="205"/>
    </location>
</feature>
<feature type="repeat" description="HEAT 3">
    <location>
        <begin position="207"/>
        <end position="243"/>
    </location>
</feature>
<feature type="repeat" description="HEAT 4">
    <location>
        <begin position="244"/>
        <end position="281"/>
    </location>
</feature>
<feature type="repeat" description="HEAT 5">
    <location>
        <begin position="285"/>
        <end position="323"/>
    </location>
</feature>
<feature type="repeat" description="HEAT 6">
    <location>
        <begin position="324"/>
        <end position="360"/>
    </location>
</feature>
<feature type="repeat" description="HEAT 7">
    <location>
        <begin position="363"/>
        <end position="400"/>
    </location>
</feature>
<feature type="repeat" description="HEAT 8">
    <location>
        <begin position="469"/>
        <end position="513"/>
    </location>
</feature>
<feature type="repeat" description="HEAT 9">
    <location>
        <begin position="515"/>
        <end position="547"/>
    </location>
</feature>
<feature type="repeat" description="HEAT 10">
    <location>
        <begin position="548"/>
        <end position="584"/>
    </location>
</feature>
<feature type="region of interest" description="Disordered" evidence="3">
    <location>
        <begin position="787"/>
        <end position="825"/>
    </location>
</feature>
<feature type="compositionally biased region" description="Basic residues" evidence="3">
    <location>
        <begin position="807"/>
        <end position="819"/>
    </location>
</feature>
<accession>Q9UTL8</accession>
<gene>
    <name type="primary">apl5</name>
    <name type="ORF">SPAC144.06</name>
</gene>
<reference key="1">
    <citation type="journal article" date="2002" name="Nature">
        <title>The genome sequence of Schizosaccharomyces pombe.</title>
        <authorList>
            <person name="Wood V."/>
            <person name="Gwilliam R."/>
            <person name="Rajandream M.A."/>
            <person name="Lyne M.H."/>
            <person name="Lyne R."/>
            <person name="Stewart A."/>
            <person name="Sgouros J.G."/>
            <person name="Peat N."/>
            <person name="Hayles J."/>
            <person name="Baker S.G."/>
            <person name="Basham D."/>
            <person name="Bowman S."/>
            <person name="Brooks K."/>
            <person name="Brown D."/>
            <person name="Brown S."/>
            <person name="Chillingworth T."/>
            <person name="Churcher C.M."/>
            <person name="Collins M."/>
            <person name="Connor R."/>
            <person name="Cronin A."/>
            <person name="Davis P."/>
            <person name="Feltwell T."/>
            <person name="Fraser A."/>
            <person name="Gentles S."/>
            <person name="Goble A."/>
            <person name="Hamlin N."/>
            <person name="Harris D.E."/>
            <person name="Hidalgo J."/>
            <person name="Hodgson G."/>
            <person name="Holroyd S."/>
            <person name="Hornsby T."/>
            <person name="Howarth S."/>
            <person name="Huckle E.J."/>
            <person name="Hunt S."/>
            <person name="Jagels K."/>
            <person name="James K.D."/>
            <person name="Jones L."/>
            <person name="Jones M."/>
            <person name="Leather S."/>
            <person name="McDonald S."/>
            <person name="McLean J."/>
            <person name="Mooney P."/>
            <person name="Moule S."/>
            <person name="Mungall K.L."/>
            <person name="Murphy L.D."/>
            <person name="Niblett D."/>
            <person name="Odell C."/>
            <person name="Oliver K."/>
            <person name="O'Neil S."/>
            <person name="Pearson D."/>
            <person name="Quail M.A."/>
            <person name="Rabbinowitsch E."/>
            <person name="Rutherford K.M."/>
            <person name="Rutter S."/>
            <person name="Saunders D."/>
            <person name="Seeger K."/>
            <person name="Sharp S."/>
            <person name="Skelton J."/>
            <person name="Simmonds M.N."/>
            <person name="Squares R."/>
            <person name="Squares S."/>
            <person name="Stevens K."/>
            <person name="Taylor K."/>
            <person name="Taylor R.G."/>
            <person name="Tivey A."/>
            <person name="Walsh S.V."/>
            <person name="Warren T."/>
            <person name="Whitehead S."/>
            <person name="Woodward J.R."/>
            <person name="Volckaert G."/>
            <person name="Aert R."/>
            <person name="Robben J."/>
            <person name="Grymonprez B."/>
            <person name="Weltjens I."/>
            <person name="Vanstreels E."/>
            <person name="Rieger M."/>
            <person name="Schaefer M."/>
            <person name="Mueller-Auer S."/>
            <person name="Gabel C."/>
            <person name="Fuchs M."/>
            <person name="Duesterhoeft A."/>
            <person name="Fritzc C."/>
            <person name="Holzer E."/>
            <person name="Moestl D."/>
            <person name="Hilbert H."/>
            <person name="Borzym K."/>
            <person name="Langer I."/>
            <person name="Beck A."/>
            <person name="Lehrach H."/>
            <person name="Reinhardt R."/>
            <person name="Pohl T.M."/>
            <person name="Eger P."/>
            <person name="Zimmermann W."/>
            <person name="Wedler H."/>
            <person name="Wambutt R."/>
            <person name="Purnelle B."/>
            <person name="Goffeau A."/>
            <person name="Cadieu E."/>
            <person name="Dreano S."/>
            <person name="Gloux S."/>
            <person name="Lelaure V."/>
            <person name="Mottier S."/>
            <person name="Galibert F."/>
            <person name="Aves S.J."/>
            <person name="Xiang Z."/>
            <person name="Hunt C."/>
            <person name="Moore K."/>
            <person name="Hurst S.M."/>
            <person name="Lucas M."/>
            <person name="Rochet M."/>
            <person name="Gaillardin C."/>
            <person name="Tallada V.A."/>
            <person name="Garzon A."/>
            <person name="Thode G."/>
            <person name="Daga R.R."/>
            <person name="Cruzado L."/>
            <person name="Jimenez J."/>
            <person name="Sanchez M."/>
            <person name="del Rey F."/>
            <person name="Benito J."/>
            <person name="Dominguez A."/>
            <person name="Revuelta J.L."/>
            <person name="Moreno S."/>
            <person name="Armstrong J."/>
            <person name="Forsburg S.L."/>
            <person name="Cerutti L."/>
            <person name="Lowe T."/>
            <person name="McCombie W.R."/>
            <person name="Paulsen I."/>
            <person name="Potashkin J."/>
            <person name="Shpakovski G.V."/>
            <person name="Ussery D."/>
            <person name="Barrell B.G."/>
            <person name="Nurse P."/>
        </authorList>
    </citation>
    <scope>NUCLEOTIDE SEQUENCE [LARGE SCALE GENOMIC DNA]</scope>
    <source>
        <strain>972 / ATCC 24843</strain>
    </source>
</reference>
<reference key="2">
    <citation type="journal article" date="2011" name="Science">
        <title>Comparative functional genomics of the fission yeasts.</title>
        <authorList>
            <person name="Rhind N."/>
            <person name="Chen Z."/>
            <person name="Yassour M."/>
            <person name="Thompson D.A."/>
            <person name="Haas B.J."/>
            <person name="Habib N."/>
            <person name="Wapinski I."/>
            <person name="Roy S."/>
            <person name="Lin M.F."/>
            <person name="Heiman D.I."/>
            <person name="Young S.K."/>
            <person name="Furuya K."/>
            <person name="Guo Y."/>
            <person name="Pidoux A."/>
            <person name="Chen H.M."/>
            <person name="Robbertse B."/>
            <person name="Goldberg J.M."/>
            <person name="Aoki K."/>
            <person name="Bayne E.H."/>
            <person name="Berlin A.M."/>
            <person name="Desjardins C.A."/>
            <person name="Dobbs E."/>
            <person name="Dukaj L."/>
            <person name="Fan L."/>
            <person name="FitzGerald M.G."/>
            <person name="French C."/>
            <person name="Gujja S."/>
            <person name="Hansen K."/>
            <person name="Keifenheim D."/>
            <person name="Levin J.Z."/>
            <person name="Mosher R.A."/>
            <person name="Mueller C.A."/>
            <person name="Pfiffner J."/>
            <person name="Priest M."/>
            <person name="Russ C."/>
            <person name="Smialowska A."/>
            <person name="Swoboda P."/>
            <person name="Sykes S.M."/>
            <person name="Vaughn M."/>
            <person name="Vengrova S."/>
            <person name="Yoder R."/>
            <person name="Zeng Q."/>
            <person name="Allshire R."/>
            <person name="Baulcombe D."/>
            <person name="Birren B.W."/>
            <person name="Brown W."/>
            <person name="Ekwall K."/>
            <person name="Kellis M."/>
            <person name="Leatherwood J."/>
            <person name="Levin H."/>
            <person name="Margalit H."/>
            <person name="Martienssen R."/>
            <person name="Nieduszynski C.A."/>
            <person name="Spatafora J.W."/>
            <person name="Friedman N."/>
            <person name="Dalgaard J.Z."/>
            <person name="Baumann P."/>
            <person name="Niki H."/>
            <person name="Regev A."/>
            <person name="Nusbaum C."/>
        </authorList>
    </citation>
    <scope>REVISION OF GENE MODEL</scope>
</reference>
<protein>
    <recommendedName>
        <fullName>AP-3 complex subunit delta</fullName>
    </recommendedName>
    <alternativeName>
        <fullName>Adaptor-related protein complex 3 subunit delta</fullName>
    </alternativeName>
    <alternativeName>
        <fullName>Delta-adaptin 3</fullName>
        <shortName>Delta-adaptin</shortName>
    </alternativeName>
</protein>
<comment type="function">
    <text evidence="1">Part of the AP-3 complex, an adaptor-related complex which is not clathrin-associated. The complex is associated with the Golgi region as well as more peripheral structures. It facilitates the budding of vesicles from the Golgi membrane and may be directly involved in trafficking to the vacuole (By similarity).</text>
</comment>
<comment type="subunit">
    <text evidence="1">Adaptor protein complex 3 (AP-3) is a heterotetramer composed of 2 large adaptins (apl5 and apl6), a medium adaptin (apm3) and a small adaptin (aps3).</text>
</comment>
<comment type="subcellular location">
    <subcellularLocation>
        <location evidence="2">Golgi apparatus</location>
    </subcellularLocation>
    <subcellularLocation>
        <location evidence="2">Cytoplasmic vesicle</location>
        <location evidence="2">Clathrin-coated vesicle membrane</location>
        <topology evidence="2">Peripheral membrane protein</topology>
        <orientation evidence="2">Cytoplasmic side</orientation>
    </subcellularLocation>
    <text evidence="2">Component of the coat surrounding the cytoplasmic face of coated vesicles located at the Golgi complex.</text>
</comment>
<comment type="similarity">
    <text evidence="4">Belongs to the adaptor complexes large subunit family.</text>
</comment>